<proteinExistence type="evidence at protein level"/>
<keyword id="KW-0002">3D-structure</keyword>
<keyword id="KW-1185">Reference proteome</keyword>
<keyword id="KW-0687">Ribonucleoprotein</keyword>
<keyword id="KW-0689">Ribosomal protein</keyword>
<keyword id="KW-0694">RNA-binding</keyword>
<keyword id="KW-0699">rRNA-binding</keyword>
<evidence type="ECO:0000255" key="1">
    <source>
        <dbReference type="HAMAP-Rule" id="MF_01369"/>
    </source>
</evidence>
<evidence type="ECO:0000305" key="2"/>
<evidence type="ECO:0007829" key="3">
    <source>
        <dbReference type="PDB" id="6WU9"/>
    </source>
</evidence>
<reference key="1">
    <citation type="journal article" date="2003" name="Science">
        <title>Role of mobile DNA in the evolution of vancomycin-resistant Enterococcus faecalis.</title>
        <authorList>
            <person name="Paulsen I.T."/>
            <person name="Banerjei L."/>
            <person name="Myers G.S.A."/>
            <person name="Nelson K.E."/>
            <person name="Seshadri R."/>
            <person name="Read T.D."/>
            <person name="Fouts D.E."/>
            <person name="Eisen J.A."/>
            <person name="Gill S.R."/>
            <person name="Heidelberg J.F."/>
            <person name="Tettelin H."/>
            <person name="Dodson R.J."/>
            <person name="Umayam L.A."/>
            <person name="Brinkac L.M."/>
            <person name="Beanan M.J."/>
            <person name="Daugherty S.C."/>
            <person name="DeBoy R.T."/>
            <person name="Durkin S.A."/>
            <person name="Kolonay J.F."/>
            <person name="Madupu R."/>
            <person name="Nelson W.C."/>
            <person name="Vamathevan J.J."/>
            <person name="Tran B."/>
            <person name="Upton J."/>
            <person name="Hansen T."/>
            <person name="Shetty J."/>
            <person name="Khouri H.M."/>
            <person name="Utterback T.R."/>
            <person name="Radune D."/>
            <person name="Ketchum K.A."/>
            <person name="Dougherty B.A."/>
            <person name="Fraser C.M."/>
        </authorList>
    </citation>
    <scope>NUCLEOTIDE SEQUENCE [LARGE SCALE GENOMIC DNA]</scope>
    <source>
        <strain>ATCC 700802 / V583</strain>
    </source>
</reference>
<comment type="function">
    <text evidence="1">One of the early assembly proteins it binds 23S rRNA. One of the proteins that surrounds the polypeptide exit tunnel on the outside of the ribosome. Forms the main docking site for trigger factor binding to the ribosome.</text>
</comment>
<comment type="subunit">
    <text evidence="1">Part of the 50S ribosomal subunit. Contacts protein L29, and trigger factor when it is bound to the ribosome.</text>
</comment>
<comment type="similarity">
    <text evidence="1">Belongs to the universal ribosomal protein uL23 family.</text>
</comment>
<sequence length="96" mass="11069">MELLDVIKRPVITEKSMLAMDEKKYTFEVDTRANKTLVKQAVESAFDVKVANVNILNVRPKFKRMGKYAGYTKKRRKAIVTLTEDSKEIQLFEAAE</sequence>
<organism>
    <name type="scientific">Enterococcus faecalis (strain ATCC 700802 / V583)</name>
    <dbReference type="NCBI Taxonomy" id="226185"/>
    <lineage>
        <taxon>Bacteria</taxon>
        <taxon>Bacillati</taxon>
        <taxon>Bacillota</taxon>
        <taxon>Bacilli</taxon>
        <taxon>Lactobacillales</taxon>
        <taxon>Enterococcaceae</taxon>
        <taxon>Enterococcus</taxon>
    </lineage>
</organism>
<feature type="chain" id="PRO_1000068077" description="Large ribosomal subunit protein uL23">
    <location>
        <begin position="1"/>
        <end position="96"/>
    </location>
</feature>
<feature type="strand" evidence="3">
    <location>
        <begin position="4"/>
        <end position="10"/>
    </location>
</feature>
<feature type="helix" evidence="3">
    <location>
        <begin position="14"/>
        <end position="19"/>
    </location>
</feature>
<feature type="turn" evidence="3">
    <location>
        <begin position="20"/>
        <end position="23"/>
    </location>
</feature>
<feature type="strand" evidence="3">
    <location>
        <begin position="24"/>
        <end position="29"/>
    </location>
</feature>
<feature type="helix" evidence="3">
    <location>
        <begin position="35"/>
        <end position="46"/>
    </location>
</feature>
<feature type="strand" evidence="3">
    <location>
        <begin position="50"/>
        <end position="58"/>
    </location>
</feature>
<feature type="strand" evidence="3">
    <location>
        <begin position="62"/>
        <end position="67"/>
    </location>
</feature>
<feature type="strand" evidence="3">
    <location>
        <begin position="69"/>
        <end position="71"/>
    </location>
</feature>
<feature type="strand" evidence="3">
    <location>
        <begin position="75"/>
        <end position="84"/>
    </location>
</feature>
<protein>
    <recommendedName>
        <fullName evidence="1">Large ribosomal subunit protein uL23</fullName>
    </recommendedName>
    <alternativeName>
        <fullName evidence="2">50S ribosomal protein L23</fullName>
    </alternativeName>
</protein>
<accession>Q839G2</accession>
<dbReference type="EMBL" id="AE016830">
    <property type="protein sequence ID" value="AAO80077.1"/>
    <property type="molecule type" value="Genomic_DNA"/>
</dbReference>
<dbReference type="RefSeq" id="NP_814006.1">
    <property type="nucleotide sequence ID" value="NC_004668.1"/>
</dbReference>
<dbReference type="RefSeq" id="WP_002356203.1">
    <property type="nucleotide sequence ID" value="NZ_KE136524.1"/>
</dbReference>
<dbReference type="PDB" id="6WU9">
    <property type="method" value="EM"/>
    <property type="resolution" value="2.90 A"/>
    <property type="chains" value="U=2-90"/>
</dbReference>
<dbReference type="PDB" id="7P7Q">
    <property type="method" value="EM"/>
    <property type="resolution" value="2.40 A"/>
    <property type="chains" value="W=1-96"/>
</dbReference>
<dbReference type="PDB" id="7P7R">
    <property type="method" value="EM"/>
    <property type="resolution" value="2.90 A"/>
    <property type="chains" value="W=1-96"/>
</dbReference>
<dbReference type="PDBsum" id="6WU9"/>
<dbReference type="PDBsum" id="7P7Q"/>
<dbReference type="PDBsum" id="7P7R"/>
<dbReference type="EMDB" id="EMD-13241"/>
<dbReference type="EMDB" id="EMD-13242"/>
<dbReference type="SMR" id="Q839G2"/>
<dbReference type="STRING" id="226185.EF_0208"/>
<dbReference type="EnsemblBacteria" id="AAO80077">
    <property type="protein sequence ID" value="AAO80077"/>
    <property type="gene ID" value="EF_0208"/>
</dbReference>
<dbReference type="KEGG" id="efa:EF0208"/>
<dbReference type="PATRIC" id="fig|226185.45.peg.58"/>
<dbReference type="eggNOG" id="COG0089">
    <property type="taxonomic scope" value="Bacteria"/>
</dbReference>
<dbReference type="HOGENOM" id="CLU_037562_3_2_9"/>
<dbReference type="Proteomes" id="UP000001415">
    <property type="component" value="Chromosome"/>
</dbReference>
<dbReference type="GO" id="GO:1990904">
    <property type="term" value="C:ribonucleoprotein complex"/>
    <property type="evidence" value="ECO:0007669"/>
    <property type="project" value="UniProtKB-KW"/>
</dbReference>
<dbReference type="GO" id="GO:0005840">
    <property type="term" value="C:ribosome"/>
    <property type="evidence" value="ECO:0007669"/>
    <property type="project" value="UniProtKB-KW"/>
</dbReference>
<dbReference type="GO" id="GO:0019843">
    <property type="term" value="F:rRNA binding"/>
    <property type="evidence" value="ECO:0007669"/>
    <property type="project" value="UniProtKB-UniRule"/>
</dbReference>
<dbReference type="GO" id="GO:0003735">
    <property type="term" value="F:structural constituent of ribosome"/>
    <property type="evidence" value="ECO:0007669"/>
    <property type="project" value="InterPro"/>
</dbReference>
<dbReference type="GO" id="GO:0006412">
    <property type="term" value="P:translation"/>
    <property type="evidence" value="ECO:0007669"/>
    <property type="project" value="UniProtKB-UniRule"/>
</dbReference>
<dbReference type="FunFam" id="3.30.70.330:FF:000001">
    <property type="entry name" value="50S ribosomal protein L23"/>
    <property type="match status" value="1"/>
</dbReference>
<dbReference type="Gene3D" id="3.30.70.330">
    <property type="match status" value="1"/>
</dbReference>
<dbReference type="HAMAP" id="MF_01369_B">
    <property type="entry name" value="Ribosomal_uL23_B"/>
    <property type="match status" value="1"/>
</dbReference>
<dbReference type="InterPro" id="IPR012677">
    <property type="entry name" value="Nucleotide-bd_a/b_plait_sf"/>
</dbReference>
<dbReference type="InterPro" id="IPR013025">
    <property type="entry name" value="Ribosomal_uL23-like"/>
</dbReference>
<dbReference type="InterPro" id="IPR012678">
    <property type="entry name" value="Ribosomal_uL23/eL15/eS24_sf"/>
</dbReference>
<dbReference type="InterPro" id="IPR001014">
    <property type="entry name" value="Ribosomal_uL23_CS"/>
</dbReference>
<dbReference type="NCBIfam" id="NF004361">
    <property type="entry name" value="PRK05738.2-1"/>
    <property type="match status" value="1"/>
</dbReference>
<dbReference type="NCBIfam" id="NF004363">
    <property type="entry name" value="PRK05738.2-4"/>
    <property type="match status" value="1"/>
</dbReference>
<dbReference type="PANTHER" id="PTHR11620">
    <property type="entry name" value="60S RIBOSOMAL PROTEIN L23A"/>
    <property type="match status" value="1"/>
</dbReference>
<dbReference type="Pfam" id="PF00276">
    <property type="entry name" value="Ribosomal_L23"/>
    <property type="match status" value="1"/>
</dbReference>
<dbReference type="SUPFAM" id="SSF54189">
    <property type="entry name" value="Ribosomal proteins S24e, L23 and L15e"/>
    <property type="match status" value="1"/>
</dbReference>
<dbReference type="PROSITE" id="PS00050">
    <property type="entry name" value="RIBOSOMAL_L23"/>
    <property type="match status" value="1"/>
</dbReference>
<name>RL23_ENTFA</name>
<gene>
    <name evidence="1" type="primary">rplW</name>
    <name type="ordered locus">EF_0208</name>
</gene>